<feature type="chain" id="PRO_1000005720" description="Arginine deiminase">
    <location>
        <begin position="1"/>
        <end position="411"/>
    </location>
</feature>
<feature type="active site" description="Amidino-cysteine intermediate" evidence="1">
    <location>
        <position position="401"/>
    </location>
</feature>
<comment type="catalytic activity">
    <reaction evidence="1">
        <text>L-arginine + H2O = L-citrulline + NH4(+)</text>
        <dbReference type="Rhea" id="RHEA:19597"/>
        <dbReference type="ChEBI" id="CHEBI:15377"/>
        <dbReference type="ChEBI" id="CHEBI:28938"/>
        <dbReference type="ChEBI" id="CHEBI:32682"/>
        <dbReference type="ChEBI" id="CHEBI:57743"/>
        <dbReference type="EC" id="3.5.3.6"/>
    </reaction>
</comment>
<comment type="pathway">
    <text evidence="1">Amino-acid degradation; L-arginine degradation via ADI pathway; carbamoyl phosphate from L-arginine: step 1/2.</text>
</comment>
<comment type="subcellular location">
    <subcellularLocation>
        <location evidence="1">Cytoplasm</location>
    </subcellularLocation>
</comment>
<comment type="similarity">
    <text evidence="1">Belongs to the arginine deiminase family.</text>
</comment>
<proteinExistence type="inferred from homology"/>
<gene>
    <name evidence="1" type="primary">arcA</name>
    <name type="ordered locus">SAHV_2619</name>
</gene>
<reference key="1">
    <citation type="journal article" date="2008" name="Antimicrob. Agents Chemother.">
        <title>Mutated response regulator graR is responsible for phenotypic conversion of Staphylococcus aureus from heterogeneous vancomycin-intermediate resistance to vancomycin-intermediate resistance.</title>
        <authorList>
            <person name="Neoh H.-M."/>
            <person name="Cui L."/>
            <person name="Yuzawa H."/>
            <person name="Takeuchi F."/>
            <person name="Matsuo M."/>
            <person name="Hiramatsu K."/>
        </authorList>
    </citation>
    <scope>NUCLEOTIDE SEQUENCE [LARGE SCALE GENOMIC DNA]</scope>
    <source>
        <strain>Mu3 / ATCC 700698</strain>
    </source>
</reference>
<organism>
    <name type="scientific">Staphylococcus aureus (strain Mu3 / ATCC 700698)</name>
    <dbReference type="NCBI Taxonomy" id="418127"/>
    <lineage>
        <taxon>Bacteria</taxon>
        <taxon>Bacillati</taxon>
        <taxon>Bacillota</taxon>
        <taxon>Bacilli</taxon>
        <taxon>Bacillales</taxon>
        <taxon>Staphylococcaceae</taxon>
        <taxon>Staphylococcus</taxon>
    </lineage>
</organism>
<sequence length="411" mass="46945">MTDGPIKVNSEIGALKTVLLKRPGKELENLVPDYLDGLLFDDIPYLEVAQKEHDHFAQVLREEGVEVLYLEKLAAESIENPQVRSEFIDDVLAESKKTILGHEEEIKTLFATLSNQELVDKIMSGVRKEEINPKCTHLVEYMDDKYPFYLDPMPNLYFTRDPQASIGHGITINRMFWRARRRESIFIQYIVKHHPRFKDANIPIWLDRDCPFNIEGGDELVLSKDVLAIGVSERTSAQAIEKLARRIFENPQATFKKVVAIEIPTSRTFMHLDTVFTMIDYDKFTMHSAILKAEGNMNIFIIEYDDVNKDIAIKQSSHLKDTLEDVLGIDDIQFIPTGNGDVIDGAREQWNDGSNTLCIRPGVVVTYDRNYVSNDLLRQKGIKVIEISGSELVRGRGGPRCMSQPLFREDI</sequence>
<protein>
    <recommendedName>
        <fullName evidence="1">Arginine deiminase</fullName>
        <shortName evidence="1">ADI</shortName>
        <ecNumber evidence="1">3.5.3.6</ecNumber>
    </recommendedName>
    <alternativeName>
        <fullName evidence="1">Arginine dihydrolase</fullName>
        <shortName evidence="1">AD</shortName>
    </alternativeName>
</protein>
<evidence type="ECO:0000255" key="1">
    <source>
        <dbReference type="HAMAP-Rule" id="MF_00242"/>
    </source>
</evidence>
<dbReference type="EC" id="3.5.3.6" evidence="1"/>
<dbReference type="EMBL" id="AP009324">
    <property type="protein sequence ID" value="BAF79502.1"/>
    <property type="molecule type" value="Genomic_DNA"/>
</dbReference>
<dbReference type="RefSeq" id="WP_000129417.1">
    <property type="nucleotide sequence ID" value="NC_009782.1"/>
</dbReference>
<dbReference type="SMR" id="A7X719"/>
<dbReference type="KEGG" id="saw:SAHV_2619"/>
<dbReference type="HOGENOM" id="CLU_052662_0_1_9"/>
<dbReference type="UniPathway" id="UPA00254">
    <property type="reaction ID" value="UER00364"/>
</dbReference>
<dbReference type="GO" id="GO:0005737">
    <property type="term" value="C:cytoplasm"/>
    <property type="evidence" value="ECO:0007669"/>
    <property type="project" value="UniProtKB-SubCell"/>
</dbReference>
<dbReference type="GO" id="GO:0016990">
    <property type="term" value="F:arginine deiminase activity"/>
    <property type="evidence" value="ECO:0007669"/>
    <property type="project" value="UniProtKB-UniRule"/>
</dbReference>
<dbReference type="GO" id="GO:0019547">
    <property type="term" value="P:arginine catabolic process to ornithine"/>
    <property type="evidence" value="ECO:0007669"/>
    <property type="project" value="UniProtKB-UniRule"/>
</dbReference>
<dbReference type="GO" id="GO:0019546">
    <property type="term" value="P:arginine deiminase pathway"/>
    <property type="evidence" value="ECO:0007669"/>
    <property type="project" value="TreeGrafter"/>
</dbReference>
<dbReference type="FunFam" id="1.10.3930.10:FF:000001">
    <property type="entry name" value="Arginine deiminase"/>
    <property type="match status" value="1"/>
</dbReference>
<dbReference type="Gene3D" id="1.10.3930.10">
    <property type="entry name" value="Arginine deiminase"/>
    <property type="match status" value="1"/>
</dbReference>
<dbReference type="Gene3D" id="3.75.10.10">
    <property type="entry name" value="L-arginine/glycine Amidinotransferase, Chain A"/>
    <property type="match status" value="1"/>
</dbReference>
<dbReference type="HAMAP" id="MF_00242">
    <property type="entry name" value="Arg_deiminase"/>
    <property type="match status" value="1"/>
</dbReference>
<dbReference type="InterPro" id="IPR003876">
    <property type="entry name" value="Arg_deiminase"/>
</dbReference>
<dbReference type="NCBIfam" id="TIGR01078">
    <property type="entry name" value="arcA"/>
    <property type="match status" value="1"/>
</dbReference>
<dbReference type="NCBIfam" id="NF002381">
    <property type="entry name" value="PRK01388.1"/>
    <property type="match status" value="1"/>
</dbReference>
<dbReference type="PANTHER" id="PTHR47271">
    <property type="entry name" value="ARGININE DEIMINASE"/>
    <property type="match status" value="1"/>
</dbReference>
<dbReference type="PANTHER" id="PTHR47271:SF2">
    <property type="entry name" value="ARGININE DEIMINASE"/>
    <property type="match status" value="1"/>
</dbReference>
<dbReference type="Pfam" id="PF02274">
    <property type="entry name" value="ADI"/>
    <property type="match status" value="1"/>
</dbReference>
<dbReference type="PIRSF" id="PIRSF006356">
    <property type="entry name" value="Arg_deiminase"/>
    <property type="match status" value="1"/>
</dbReference>
<dbReference type="PRINTS" id="PR01466">
    <property type="entry name" value="ARGDEIMINASE"/>
</dbReference>
<dbReference type="SUPFAM" id="SSF55909">
    <property type="entry name" value="Pentein"/>
    <property type="match status" value="1"/>
</dbReference>
<accession>A7X719</accession>
<keyword id="KW-0056">Arginine metabolism</keyword>
<keyword id="KW-0963">Cytoplasm</keyword>
<keyword id="KW-0378">Hydrolase</keyword>
<name>ARCA_STAA1</name>